<dbReference type="EC" id="4.2.1.20" evidence="1"/>
<dbReference type="EMBL" id="AP008232">
    <property type="protein sequence ID" value="BAE74672.1"/>
    <property type="molecule type" value="Genomic_DNA"/>
</dbReference>
<dbReference type="RefSeq" id="WP_011411217.1">
    <property type="nucleotide sequence ID" value="NC_007712.1"/>
</dbReference>
<dbReference type="SMR" id="Q2NT53"/>
<dbReference type="STRING" id="343509.SG1397"/>
<dbReference type="KEGG" id="sgl:SG1397"/>
<dbReference type="eggNOG" id="COG0159">
    <property type="taxonomic scope" value="Bacteria"/>
</dbReference>
<dbReference type="HOGENOM" id="CLU_016734_0_4_6"/>
<dbReference type="OrthoDB" id="9804578at2"/>
<dbReference type="BioCyc" id="SGLO343509:SGP1_RS12310-MONOMER"/>
<dbReference type="UniPathway" id="UPA00035">
    <property type="reaction ID" value="UER00044"/>
</dbReference>
<dbReference type="Proteomes" id="UP000001932">
    <property type="component" value="Chromosome"/>
</dbReference>
<dbReference type="GO" id="GO:0005829">
    <property type="term" value="C:cytosol"/>
    <property type="evidence" value="ECO:0007669"/>
    <property type="project" value="TreeGrafter"/>
</dbReference>
<dbReference type="GO" id="GO:0004834">
    <property type="term" value="F:tryptophan synthase activity"/>
    <property type="evidence" value="ECO:0007669"/>
    <property type="project" value="UniProtKB-UniRule"/>
</dbReference>
<dbReference type="CDD" id="cd04724">
    <property type="entry name" value="Tryptophan_synthase_alpha"/>
    <property type="match status" value="1"/>
</dbReference>
<dbReference type="FunFam" id="3.20.20.70:FF:000037">
    <property type="entry name" value="Tryptophan synthase alpha chain"/>
    <property type="match status" value="1"/>
</dbReference>
<dbReference type="Gene3D" id="3.20.20.70">
    <property type="entry name" value="Aldolase class I"/>
    <property type="match status" value="1"/>
</dbReference>
<dbReference type="HAMAP" id="MF_00131">
    <property type="entry name" value="Trp_synth_alpha"/>
    <property type="match status" value="1"/>
</dbReference>
<dbReference type="InterPro" id="IPR013785">
    <property type="entry name" value="Aldolase_TIM"/>
</dbReference>
<dbReference type="InterPro" id="IPR011060">
    <property type="entry name" value="RibuloseP-bd_barrel"/>
</dbReference>
<dbReference type="InterPro" id="IPR018204">
    <property type="entry name" value="Trp_synthase_alpha_AS"/>
</dbReference>
<dbReference type="InterPro" id="IPR002028">
    <property type="entry name" value="Trp_synthase_suA"/>
</dbReference>
<dbReference type="NCBIfam" id="TIGR00262">
    <property type="entry name" value="trpA"/>
    <property type="match status" value="1"/>
</dbReference>
<dbReference type="PANTHER" id="PTHR43406:SF1">
    <property type="entry name" value="TRYPTOPHAN SYNTHASE ALPHA CHAIN, CHLOROPLASTIC"/>
    <property type="match status" value="1"/>
</dbReference>
<dbReference type="PANTHER" id="PTHR43406">
    <property type="entry name" value="TRYPTOPHAN SYNTHASE, ALPHA CHAIN"/>
    <property type="match status" value="1"/>
</dbReference>
<dbReference type="Pfam" id="PF00290">
    <property type="entry name" value="Trp_syntA"/>
    <property type="match status" value="1"/>
</dbReference>
<dbReference type="SUPFAM" id="SSF51366">
    <property type="entry name" value="Ribulose-phoshate binding barrel"/>
    <property type="match status" value="1"/>
</dbReference>
<dbReference type="PROSITE" id="PS00167">
    <property type="entry name" value="TRP_SYNTHASE_ALPHA"/>
    <property type="match status" value="1"/>
</dbReference>
<accession>Q2NT53</accession>
<evidence type="ECO:0000255" key="1">
    <source>
        <dbReference type="HAMAP-Rule" id="MF_00131"/>
    </source>
</evidence>
<comment type="function">
    <text evidence="1">The alpha subunit is responsible for the aldol cleavage of indoleglycerol phosphate to indole and glyceraldehyde 3-phosphate.</text>
</comment>
<comment type="catalytic activity">
    <reaction evidence="1">
        <text>(1S,2R)-1-C-(indol-3-yl)glycerol 3-phosphate + L-serine = D-glyceraldehyde 3-phosphate + L-tryptophan + H2O</text>
        <dbReference type="Rhea" id="RHEA:10532"/>
        <dbReference type="ChEBI" id="CHEBI:15377"/>
        <dbReference type="ChEBI" id="CHEBI:33384"/>
        <dbReference type="ChEBI" id="CHEBI:57912"/>
        <dbReference type="ChEBI" id="CHEBI:58866"/>
        <dbReference type="ChEBI" id="CHEBI:59776"/>
        <dbReference type="EC" id="4.2.1.20"/>
    </reaction>
</comment>
<comment type="pathway">
    <text evidence="1">Amino-acid biosynthesis; L-tryptophan biosynthesis; L-tryptophan from chorismate: step 5/5.</text>
</comment>
<comment type="subunit">
    <text evidence="1">Tetramer of two alpha and two beta chains.</text>
</comment>
<comment type="similarity">
    <text evidence="1">Belongs to the TrpA family.</text>
</comment>
<sequence length="268" mass="28872">MERYQQLFSQLAARHEGAFVPFVTLGDPNPTLSLRIIDTLIDAGADALELGIPFSDPLADGPTIQNANLRAFSSGVTPAHCFEMLATIRQKYPAIPIGLLMYANLVYNEGIDAFYAHCAEVGIDSVLVADVPLQESLPFRQAALRHNVAPIVICPPNSDDALLREIASHGRGYTYLLARAGVTGSEKRANTPLKHLIDTLKEYHAAPTLQGFGISEPGQVRTALHAGTAGAISGSAIVRIIEKHEDNPAVMLEQLAQFVRELKAATRG</sequence>
<reference key="1">
    <citation type="journal article" date="2006" name="Genome Res.">
        <title>Massive genome erosion and functional adaptations provide insights into the symbiotic lifestyle of Sodalis glossinidius in the tsetse host.</title>
        <authorList>
            <person name="Toh H."/>
            <person name="Weiss B.L."/>
            <person name="Perkin S.A.H."/>
            <person name="Yamashita A."/>
            <person name="Oshima K."/>
            <person name="Hattori M."/>
            <person name="Aksoy S."/>
        </authorList>
    </citation>
    <scope>NUCLEOTIDE SEQUENCE [LARGE SCALE GENOMIC DNA]</scope>
    <source>
        <strain>morsitans</strain>
    </source>
</reference>
<proteinExistence type="inferred from homology"/>
<name>TRPA_SODGM</name>
<keyword id="KW-0028">Amino-acid biosynthesis</keyword>
<keyword id="KW-0057">Aromatic amino acid biosynthesis</keyword>
<keyword id="KW-0456">Lyase</keyword>
<keyword id="KW-0822">Tryptophan biosynthesis</keyword>
<feature type="chain" id="PRO_1000018285" description="Tryptophan synthase alpha chain">
    <location>
        <begin position="1"/>
        <end position="268"/>
    </location>
</feature>
<feature type="active site" description="Proton acceptor" evidence="1">
    <location>
        <position position="49"/>
    </location>
</feature>
<feature type="active site" description="Proton acceptor" evidence="1">
    <location>
        <position position="60"/>
    </location>
</feature>
<organism>
    <name type="scientific">Sodalis glossinidius (strain morsitans)</name>
    <dbReference type="NCBI Taxonomy" id="343509"/>
    <lineage>
        <taxon>Bacteria</taxon>
        <taxon>Pseudomonadati</taxon>
        <taxon>Pseudomonadota</taxon>
        <taxon>Gammaproteobacteria</taxon>
        <taxon>Enterobacterales</taxon>
        <taxon>Bruguierivoracaceae</taxon>
        <taxon>Sodalis</taxon>
    </lineage>
</organism>
<protein>
    <recommendedName>
        <fullName evidence="1">Tryptophan synthase alpha chain</fullName>
        <ecNumber evidence="1">4.2.1.20</ecNumber>
    </recommendedName>
</protein>
<gene>
    <name evidence="1" type="primary">trpA</name>
    <name type="ordered locus">SG1397</name>
</gene>